<accession>Q5FT15</accession>
<gene>
    <name evidence="1" type="primary">pstB</name>
    <name type="ordered locus">GOX0704</name>
</gene>
<comment type="function">
    <text evidence="1">Part of the ABC transporter complex PstSACB involved in phosphate import. Responsible for energy coupling to the transport system.</text>
</comment>
<comment type="catalytic activity">
    <reaction evidence="1">
        <text>phosphate(out) + ATP + H2O = ADP + 2 phosphate(in) + H(+)</text>
        <dbReference type="Rhea" id="RHEA:24440"/>
        <dbReference type="ChEBI" id="CHEBI:15377"/>
        <dbReference type="ChEBI" id="CHEBI:15378"/>
        <dbReference type="ChEBI" id="CHEBI:30616"/>
        <dbReference type="ChEBI" id="CHEBI:43474"/>
        <dbReference type="ChEBI" id="CHEBI:456216"/>
        <dbReference type="EC" id="7.3.2.1"/>
    </reaction>
</comment>
<comment type="subunit">
    <text evidence="1">The complex is composed of two ATP-binding proteins (PstB), two transmembrane proteins (PstC and PstA) and a solute-binding protein (PstS).</text>
</comment>
<comment type="subcellular location">
    <subcellularLocation>
        <location evidence="1">Cell inner membrane</location>
        <topology evidence="1">Peripheral membrane protein</topology>
    </subcellularLocation>
</comment>
<comment type="similarity">
    <text evidence="1">Belongs to the ABC transporter superfamily. Phosphate importer (TC 3.A.1.7) family.</text>
</comment>
<keyword id="KW-0067">ATP-binding</keyword>
<keyword id="KW-0997">Cell inner membrane</keyword>
<keyword id="KW-1003">Cell membrane</keyword>
<keyword id="KW-0472">Membrane</keyword>
<keyword id="KW-0547">Nucleotide-binding</keyword>
<keyword id="KW-0592">Phosphate transport</keyword>
<keyword id="KW-1185">Reference proteome</keyword>
<keyword id="KW-1278">Translocase</keyword>
<keyword id="KW-0813">Transport</keyword>
<reference key="1">
    <citation type="journal article" date="2005" name="Nat. Biotechnol.">
        <title>Complete genome sequence of the acetic acid bacterium Gluconobacter oxydans.</title>
        <authorList>
            <person name="Prust C."/>
            <person name="Hoffmeister M."/>
            <person name="Liesegang H."/>
            <person name="Wiezer A."/>
            <person name="Fricke W.F."/>
            <person name="Ehrenreich A."/>
            <person name="Gottschalk G."/>
            <person name="Deppenmeier U."/>
        </authorList>
    </citation>
    <scope>NUCLEOTIDE SEQUENCE [LARGE SCALE GENOMIC DNA]</scope>
    <source>
        <strain>621H</strain>
    </source>
</reference>
<dbReference type="EC" id="7.3.2.1" evidence="1"/>
<dbReference type="EMBL" id="CP000009">
    <property type="protein sequence ID" value="AAW60481.1"/>
    <property type="molecule type" value="Genomic_DNA"/>
</dbReference>
<dbReference type="SMR" id="Q5FT15"/>
<dbReference type="STRING" id="290633.GOX0704"/>
<dbReference type="KEGG" id="gox:GOX0704"/>
<dbReference type="eggNOG" id="COG1117">
    <property type="taxonomic scope" value="Bacteria"/>
</dbReference>
<dbReference type="HOGENOM" id="CLU_000604_1_22_5"/>
<dbReference type="Proteomes" id="UP000006375">
    <property type="component" value="Chromosome"/>
</dbReference>
<dbReference type="GO" id="GO:0005886">
    <property type="term" value="C:plasma membrane"/>
    <property type="evidence" value="ECO:0007669"/>
    <property type="project" value="UniProtKB-SubCell"/>
</dbReference>
<dbReference type="GO" id="GO:0005524">
    <property type="term" value="F:ATP binding"/>
    <property type="evidence" value="ECO:0007669"/>
    <property type="project" value="UniProtKB-KW"/>
</dbReference>
<dbReference type="GO" id="GO:0016887">
    <property type="term" value="F:ATP hydrolysis activity"/>
    <property type="evidence" value="ECO:0007669"/>
    <property type="project" value="InterPro"/>
</dbReference>
<dbReference type="GO" id="GO:0015415">
    <property type="term" value="F:ATPase-coupled phosphate ion transmembrane transporter activity"/>
    <property type="evidence" value="ECO:0007669"/>
    <property type="project" value="UniProtKB-EC"/>
</dbReference>
<dbReference type="GO" id="GO:0035435">
    <property type="term" value="P:phosphate ion transmembrane transport"/>
    <property type="evidence" value="ECO:0007669"/>
    <property type="project" value="InterPro"/>
</dbReference>
<dbReference type="CDD" id="cd03260">
    <property type="entry name" value="ABC_PstB_phosphate_transporter"/>
    <property type="match status" value="1"/>
</dbReference>
<dbReference type="FunFam" id="3.40.50.300:FF:000132">
    <property type="entry name" value="Phosphate import ATP-binding protein PstB"/>
    <property type="match status" value="1"/>
</dbReference>
<dbReference type="Gene3D" id="3.40.50.300">
    <property type="entry name" value="P-loop containing nucleotide triphosphate hydrolases"/>
    <property type="match status" value="1"/>
</dbReference>
<dbReference type="InterPro" id="IPR003593">
    <property type="entry name" value="AAA+_ATPase"/>
</dbReference>
<dbReference type="InterPro" id="IPR003439">
    <property type="entry name" value="ABC_transporter-like_ATP-bd"/>
</dbReference>
<dbReference type="InterPro" id="IPR017871">
    <property type="entry name" value="ABC_transporter-like_CS"/>
</dbReference>
<dbReference type="InterPro" id="IPR027417">
    <property type="entry name" value="P-loop_NTPase"/>
</dbReference>
<dbReference type="InterPro" id="IPR005670">
    <property type="entry name" value="PstB-like"/>
</dbReference>
<dbReference type="NCBIfam" id="TIGR00972">
    <property type="entry name" value="3a0107s01c2"/>
    <property type="match status" value="1"/>
</dbReference>
<dbReference type="PANTHER" id="PTHR43423">
    <property type="entry name" value="ABC TRANSPORTER I FAMILY MEMBER 17"/>
    <property type="match status" value="1"/>
</dbReference>
<dbReference type="PANTHER" id="PTHR43423:SF3">
    <property type="entry name" value="PHOSPHATE IMPORT ATP-BINDING PROTEIN PSTB"/>
    <property type="match status" value="1"/>
</dbReference>
<dbReference type="Pfam" id="PF00005">
    <property type="entry name" value="ABC_tran"/>
    <property type="match status" value="1"/>
</dbReference>
<dbReference type="SMART" id="SM00382">
    <property type="entry name" value="AAA"/>
    <property type="match status" value="1"/>
</dbReference>
<dbReference type="SUPFAM" id="SSF52540">
    <property type="entry name" value="P-loop containing nucleoside triphosphate hydrolases"/>
    <property type="match status" value="1"/>
</dbReference>
<dbReference type="PROSITE" id="PS00211">
    <property type="entry name" value="ABC_TRANSPORTER_1"/>
    <property type="match status" value="1"/>
</dbReference>
<dbReference type="PROSITE" id="PS50893">
    <property type="entry name" value="ABC_TRANSPORTER_2"/>
    <property type="match status" value="1"/>
</dbReference>
<dbReference type="PROSITE" id="PS51238">
    <property type="entry name" value="PSTB"/>
    <property type="match status" value="1"/>
</dbReference>
<organism>
    <name type="scientific">Gluconobacter oxydans (strain 621H)</name>
    <name type="common">Gluconobacter suboxydans</name>
    <dbReference type="NCBI Taxonomy" id="290633"/>
    <lineage>
        <taxon>Bacteria</taxon>
        <taxon>Pseudomonadati</taxon>
        <taxon>Pseudomonadota</taxon>
        <taxon>Alphaproteobacteria</taxon>
        <taxon>Acetobacterales</taxon>
        <taxon>Acetobacteraceae</taxon>
        <taxon>Gluconobacter</taxon>
    </lineage>
</organism>
<proteinExistence type="inferred from homology"/>
<name>PSTB_GLUOX</name>
<sequence length="268" mass="30257">MIQDSMMTETDPQVAKSPEVALAVRNLNFYYGENHALHDISIDFPARRVTAMIGPSGCGKSTLLRVFNRMYDLYPGQRATGEVIFDGRNVLERDLDLNILRARVGMVFQKPTPFPMSIYDNIAFGVRLHEKLNKAEMDARVQDVLTRVALWNEVRDRLNAPASGLSGGQQQRLCIARSIATRPEVLLLDEPTSALDPISTARIEELLDELKEEFTIAIVTHNMQQAARCADQVAFFYMGRLIEVDSADRMFTNPKQQQTQDYITGRFG</sequence>
<evidence type="ECO:0000255" key="1">
    <source>
        <dbReference type="HAMAP-Rule" id="MF_01702"/>
    </source>
</evidence>
<feature type="chain" id="PRO_0000272457" description="Phosphate import ATP-binding protein PstB">
    <location>
        <begin position="1"/>
        <end position="268"/>
    </location>
</feature>
<feature type="domain" description="ABC transporter" evidence="1">
    <location>
        <begin position="22"/>
        <end position="263"/>
    </location>
</feature>
<feature type="binding site" evidence="1">
    <location>
        <begin position="54"/>
        <end position="61"/>
    </location>
    <ligand>
        <name>ATP</name>
        <dbReference type="ChEBI" id="CHEBI:30616"/>
    </ligand>
</feature>
<protein>
    <recommendedName>
        <fullName evidence="1">Phosphate import ATP-binding protein PstB</fullName>
        <ecNumber evidence="1">7.3.2.1</ecNumber>
    </recommendedName>
    <alternativeName>
        <fullName evidence="1">ABC phosphate transporter</fullName>
    </alternativeName>
    <alternativeName>
        <fullName evidence="1">Phosphate-transporting ATPase</fullName>
    </alternativeName>
</protein>